<comment type="function">
    <text evidence="1">Catalyzes the ATP-dependent conversion of 7-carboxy-7-deazaguanine (CDG) to 7-cyano-7-deazaguanine (preQ(0)).</text>
</comment>
<comment type="catalytic activity">
    <reaction evidence="1">
        <text>7-carboxy-7-deazaguanine + NH4(+) + ATP = 7-cyano-7-deazaguanine + ADP + phosphate + H2O + H(+)</text>
        <dbReference type="Rhea" id="RHEA:27982"/>
        <dbReference type="ChEBI" id="CHEBI:15377"/>
        <dbReference type="ChEBI" id="CHEBI:15378"/>
        <dbReference type="ChEBI" id="CHEBI:28938"/>
        <dbReference type="ChEBI" id="CHEBI:30616"/>
        <dbReference type="ChEBI" id="CHEBI:43474"/>
        <dbReference type="ChEBI" id="CHEBI:45075"/>
        <dbReference type="ChEBI" id="CHEBI:61036"/>
        <dbReference type="ChEBI" id="CHEBI:456216"/>
        <dbReference type="EC" id="6.3.4.20"/>
    </reaction>
</comment>
<comment type="cofactor">
    <cofactor evidence="1">
        <name>Zn(2+)</name>
        <dbReference type="ChEBI" id="CHEBI:29105"/>
    </cofactor>
    <text evidence="1">Binds 1 zinc ion per subunit.</text>
</comment>
<comment type="pathway">
    <text evidence="1">Purine metabolism; 7-cyano-7-deazaguanine biosynthesis.</text>
</comment>
<comment type="similarity">
    <text evidence="1">Belongs to the QueC family.</text>
</comment>
<gene>
    <name evidence="1" type="primary">queC</name>
    <name type="ordered locus">Noc_0149</name>
</gene>
<sequence length="224" mass="24284">MTAPKAVVLVSGGLDSATVLAIAREQEFICHTLSFNYGQRHRVELQAAAEISRRMGAVEHKRITIDLGGFGGSALTDPSMAVPEASSGAIPITYVPARNTVFLSFALGWAEVLGAQDIFIGVNAVDYSGYPDCRPAFIKAFEHLAKLATCAGLEGRAFRIQAPLLHLSKAEIIREGMRLGIDYSRTISCYQADENGRACGVCDSCRFRKQGFWDAGVPDPTRYH</sequence>
<reference key="1">
    <citation type="journal article" date="2006" name="Appl. Environ. Microbiol.">
        <title>Complete genome sequence of the marine, chemolithoautotrophic, ammonia-oxidizing bacterium Nitrosococcus oceani ATCC 19707.</title>
        <authorList>
            <person name="Klotz M.G."/>
            <person name="Arp D.J."/>
            <person name="Chain P.S.G."/>
            <person name="El-Sheikh A.F."/>
            <person name="Hauser L.J."/>
            <person name="Hommes N.G."/>
            <person name="Larimer F.W."/>
            <person name="Malfatti S.A."/>
            <person name="Norton J.M."/>
            <person name="Poret-Peterson A.T."/>
            <person name="Vergez L.M."/>
            <person name="Ward B.B."/>
        </authorList>
    </citation>
    <scope>NUCLEOTIDE SEQUENCE [LARGE SCALE GENOMIC DNA]</scope>
    <source>
        <strain>ATCC 19707 / BCRC 17464 / JCM 30415 / NCIMB 11848 / C-107</strain>
    </source>
</reference>
<proteinExistence type="inferred from homology"/>
<evidence type="ECO:0000255" key="1">
    <source>
        <dbReference type="HAMAP-Rule" id="MF_01633"/>
    </source>
</evidence>
<organism>
    <name type="scientific">Nitrosococcus oceani (strain ATCC 19707 / BCRC 17464 / JCM 30415 / NCIMB 11848 / C-107)</name>
    <dbReference type="NCBI Taxonomy" id="323261"/>
    <lineage>
        <taxon>Bacteria</taxon>
        <taxon>Pseudomonadati</taxon>
        <taxon>Pseudomonadota</taxon>
        <taxon>Gammaproteobacteria</taxon>
        <taxon>Chromatiales</taxon>
        <taxon>Chromatiaceae</taxon>
        <taxon>Nitrosococcus</taxon>
    </lineage>
</organism>
<feature type="chain" id="PRO_0000246867" description="7-cyano-7-deazaguanine synthase">
    <location>
        <begin position="1"/>
        <end position="224"/>
    </location>
</feature>
<feature type="binding site" evidence="1">
    <location>
        <begin position="10"/>
        <end position="20"/>
    </location>
    <ligand>
        <name>ATP</name>
        <dbReference type="ChEBI" id="CHEBI:30616"/>
    </ligand>
</feature>
<feature type="binding site" evidence="1">
    <location>
        <position position="189"/>
    </location>
    <ligand>
        <name>Zn(2+)</name>
        <dbReference type="ChEBI" id="CHEBI:29105"/>
    </ligand>
</feature>
<feature type="binding site" evidence="1">
    <location>
        <position position="199"/>
    </location>
    <ligand>
        <name>Zn(2+)</name>
        <dbReference type="ChEBI" id="CHEBI:29105"/>
    </ligand>
</feature>
<feature type="binding site" evidence="1">
    <location>
        <position position="202"/>
    </location>
    <ligand>
        <name>Zn(2+)</name>
        <dbReference type="ChEBI" id="CHEBI:29105"/>
    </ligand>
</feature>
<feature type="binding site" evidence="1">
    <location>
        <position position="205"/>
    </location>
    <ligand>
        <name>Zn(2+)</name>
        <dbReference type="ChEBI" id="CHEBI:29105"/>
    </ligand>
</feature>
<protein>
    <recommendedName>
        <fullName evidence="1">7-cyano-7-deazaguanine synthase</fullName>
        <ecNumber evidence="1">6.3.4.20</ecNumber>
    </recommendedName>
    <alternativeName>
        <fullName evidence="1">7-cyano-7-carbaguanine synthase</fullName>
    </alternativeName>
    <alternativeName>
        <fullName evidence="1">PreQ(0) synthase</fullName>
    </alternativeName>
    <alternativeName>
        <fullName evidence="1">Queuosine biosynthesis protein QueC</fullName>
    </alternativeName>
</protein>
<keyword id="KW-0067">ATP-binding</keyword>
<keyword id="KW-0436">Ligase</keyword>
<keyword id="KW-0479">Metal-binding</keyword>
<keyword id="KW-0547">Nucleotide-binding</keyword>
<keyword id="KW-0671">Queuosine biosynthesis</keyword>
<keyword id="KW-1185">Reference proteome</keyword>
<keyword id="KW-0862">Zinc</keyword>
<dbReference type="EC" id="6.3.4.20" evidence="1"/>
<dbReference type="EMBL" id="CP000127">
    <property type="protein sequence ID" value="ABA56682.1"/>
    <property type="molecule type" value="Genomic_DNA"/>
</dbReference>
<dbReference type="RefSeq" id="WP_002813595.1">
    <property type="nucleotide sequence ID" value="NC_007484.1"/>
</dbReference>
<dbReference type="SMR" id="Q3JER4"/>
<dbReference type="FunCoup" id="Q3JER4">
    <property type="interactions" value="151"/>
</dbReference>
<dbReference type="STRING" id="323261.Noc_0149"/>
<dbReference type="KEGG" id="noc:Noc_0149"/>
<dbReference type="eggNOG" id="COG0603">
    <property type="taxonomic scope" value="Bacteria"/>
</dbReference>
<dbReference type="HOGENOM" id="CLU_081854_1_1_6"/>
<dbReference type="InParanoid" id="Q3JER4"/>
<dbReference type="UniPathway" id="UPA00391"/>
<dbReference type="Proteomes" id="UP000006838">
    <property type="component" value="Chromosome"/>
</dbReference>
<dbReference type="GO" id="GO:0005524">
    <property type="term" value="F:ATP binding"/>
    <property type="evidence" value="ECO:0007669"/>
    <property type="project" value="UniProtKB-UniRule"/>
</dbReference>
<dbReference type="GO" id="GO:0016879">
    <property type="term" value="F:ligase activity, forming carbon-nitrogen bonds"/>
    <property type="evidence" value="ECO:0007669"/>
    <property type="project" value="UniProtKB-UniRule"/>
</dbReference>
<dbReference type="GO" id="GO:0008270">
    <property type="term" value="F:zinc ion binding"/>
    <property type="evidence" value="ECO:0007669"/>
    <property type="project" value="UniProtKB-UniRule"/>
</dbReference>
<dbReference type="GO" id="GO:0008616">
    <property type="term" value="P:queuosine biosynthetic process"/>
    <property type="evidence" value="ECO:0007669"/>
    <property type="project" value="UniProtKB-UniRule"/>
</dbReference>
<dbReference type="CDD" id="cd01995">
    <property type="entry name" value="QueC-like"/>
    <property type="match status" value="1"/>
</dbReference>
<dbReference type="FunFam" id="3.40.50.620:FF:000131">
    <property type="entry name" value="7-cyano-7-deazaguanine synthase"/>
    <property type="match status" value="1"/>
</dbReference>
<dbReference type="Gene3D" id="3.40.50.620">
    <property type="entry name" value="HUPs"/>
    <property type="match status" value="1"/>
</dbReference>
<dbReference type="HAMAP" id="MF_01633">
    <property type="entry name" value="QueC"/>
    <property type="match status" value="1"/>
</dbReference>
<dbReference type="InterPro" id="IPR018317">
    <property type="entry name" value="QueC"/>
</dbReference>
<dbReference type="InterPro" id="IPR014729">
    <property type="entry name" value="Rossmann-like_a/b/a_fold"/>
</dbReference>
<dbReference type="NCBIfam" id="TIGR00364">
    <property type="entry name" value="7-cyano-7-deazaguanine synthase QueC"/>
    <property type="match status" value="1"/>
</dbReference>
<dbReference type="PANTHER" id="PTHR42914">
    <property type="entry name" value="7-CYANO-7-DEAZAGUANINE SYNTHASE"/>
    <property type="match status" value="1"/>
</dbReference>
<dbReference type="PANTHER" id="PTHR42914:SF1">
    <property type="entry name" value="7-CYANO-7-DEAZAGUANINE SYNTHASE"/>
    <property type="match status" value="1"/>
</dbReference>
<dbReference type="Pfam" id="PF06508">
    <property type="entry name" value="QueC"/>
    <property type="match status" value="1"/>
</dbReference>
<dbReference type="PIRSF" id="PIRSF006293">
    <property type="entry name" value="ExsB"/>
    <property type="match status" value="1"/>
</dbReference>
<dbReference type="SUPFAM" id="SSF52402">
    <property type="entry name" value="Adenine nucleotide alpha hydrolases-like"/>
    <property type="match status" value="1"/>
</dbReference>
<accession>Q3JER4</accession>
<name>QUEC_NITOC</name>